<protein>
    <recommendedName>
        <fullName evidence="1">Ribulose bisphosphate carboxylase large chain</fullName>
        <shortName evidence="1">RuBisCO large subunit</shortName>
        <ecNumber evidence="1">4.1.1.39</ecNumber>
    </recommendedName>
</protein>
<feature type="propeptide" id="PRO_0000355782" evidence="1">
    <location>
        <begin position="1"/>
        <end position="2"/>
    </location>
</feature>
<feature type="chain" id="PRO_0000355783" description="Ribulose bisphosphate carboxylase large chain">
    <location>
        <begin position="3"/>
        <end position="478"/>
    </location>
</feature>
<feature type="active site" description="Proton acceptor" evidence="1">
    <location>
        <position position="175"/>
    </location>
</feature>
<feature type="active site" description="Proton acceptor" evidence="1">
    <location>
        <position position="294"/>
    </location>
</feature>
<feature type="binding site" description="in homodimeric partner" evidence="1">
    <location>
        <position position="123"/>
    </location>
    <ligand>
        <name>substrate</name>
    </ligand>
</feature>
<feature type="binding site" evidence="1">
    <location>
        <position position="173"/>
    </location>
    <ligand>
        <name>substrate</name>
    </ligand>
</feature>
<feature type="binding site" evidence="1">
    <location>
        <position position="177"/>
    </location>
    <ligand>
        <name>substrate</name>
    </ligand>
</feature>
<feature type="binding site" description="via carbamate group" evidence="1">
    <location>
        <position position="201"/>
    </location>
    <ligand>
        <name>Mg(2+)</name>
        <dbReference type="ChEBI" id="CHEBI:18420"/>
    </ligand>
</feature>
<feature type="binding site" evidence="1">
    <location>
        <position position="203"/>
    </location>
    <ligand>
        <name>Mg(2+)</name>
        <dbReference type="ChEBI" id="CHEBI:18420"/>
    </ligand>
</feature>
<feature type="binding site" evidence="1">
    <location>
        <position position="204"/>
    </location>
    <ligand>
        <name>Mg(2+)</name>
        <dbReference type="ChEBI" id="CHEBI:18420"/>
    </ligand>
</feature>
<feature type="binding site" evidence="1">
    <location>
        <position position="295"/>
    </location>
    <ligand>
        <name>substrate</name>
    </ligand>
</feature>
<feature type="binding site" evidence="1">
    <location>
        <position position="327"/>
    </location>
    <ligand>
        <name>substrate</name>
    </ligand>
</feature>
<feature type="binding site" evidence="1">
    <location>
        <position position="379"/>
    </location>
    <ligand>
        <name>substrate</name>
    </ligand>
</feature>
<feature type="site" description="Transition state stabilizer" evidence="1">
    <location>
        <position position="334"/>
    </location>
</feature>
<feature type="modified residue" description="N-acetylproline" evidence="1">
    <location>
        <position position="3"/>
    </location>
</feature>
<feature type="modified residue" description="N6,N6,N6-trimethyllysine" evidence="1">
    <location>
        <position position="14"/>
    </location>
</feature>
<feature type="modified residue" description="N6-carboxylysine" evidence="1">
    <location>
        <position position="201"/>
    </location>
</feature>
<feature type="disulfide bond" description="Interchain; in linked form" evidence="1">
    <location>
        <position position="247"/>
    </location>
</feature>
<evidence type="ECO:0000255" key="1">
    <source>
        <dbReference type="HAMAP-Rule" id="MF_01338"/>
    </source>
</evidence>
<proteinExistence type="inferred from homology"/>
<geneLocation type="chloroplast"/>
<keyword id="KW-0007">Acetylation</keyword>
<keyword id="KW-0113">Calvin cycle</keyword>
<keyword id="KW-0120">Carbon dioxide fixation</keyword>
<keyword id="KW-0150">Chloroplast</keyword>
<keyword id="KW-1015">Disulfide bond</keyword>
<keyword id="KW-0456">Lyase</keyword>
<keyword id="KW-0460">Magnesium</keyword>
<keyword id="KW-0479">Metal-binding</keyword>
<keyword id="KW-0488">Methylation</keyword>
<keyword id="KW-0503">Monooxygenase</keyword>
<keyword id="KW-0560">Oxidoreductase</keyword>
<keyword id="KW-0601">Photorespiration</keyword>
<keyword id="KW-0602">Photosynthesis</keyword>
<keyword id="KW-0934">Plastid</keyword>
<reference key="1">
    <citation type="journal article" date="2008" name="J. Mol. Evol.">
        <title>Complete sequence of the Duckweed (Lemna minor) chloroplast genome: structural organization and phylogenetic relationships to other angiosperms.</title>
        <authorList>
            <person name="Mardanov A.V."/>
            <person name="Ravin N.V."/>
            <person name="Kuznetsov B.B."/>
            <person name="Samigullin T.H."/>
            <person name="Antonov A.S."/>
            <person name="Kolganova T.V."/>
            <person name="Skyabin K.G."/>
        </authorList>
    </citation>
    <scope>NUCLEOTIDE SEQUENCE [LARGE SCALE GENOMIC DNA]</scope>
</reference>
<gene>
    <name evidence="1" type="primary">rbcL</name>
</gene>
<sequence length="478" mass="53114">MSPQTETKASAGFKAGVKDYKLNYYTPEYETKDTDILAAFRVTPQPGVPPEEAGAAVAAESSTGTWTTVWTDGLTSLDRYKGRCYHIEPVAGEENQFIAYIAYPLDLFEEGSVTNMFTSIVGNVFGFKALRALRLEDLRIPPAYSKTFQGPPHGIQVERDKLNKYGRPLLGCTIKPKLGLSAKNYGRAVYECLRGGLDFTKDDENVNSQPFMRWRDRFLFCAEAIYKAQAETGEIKGHYLNATAGTCEEMIKRAVFARELGVPIVMHDYLTGGFTANTSLAYYCRDNGLLLHIHRAMHAVIDRQKNHGMHFRVLAKALRMSGGDHVHSGTVVGKLEGEREMTLGFVDLLRDDFIEKDRSRGIFFTQDWVSMPGVLPVASGGIHVWHMPALTEIFGDDSVLQFGGGTLGHPWGNAPGAVANRVALEACVKARNEGRDLAREGNEIIREACNWSPELAAACEVWKEIKFEYEPVDKLDVK</sequence>
<organism>
    <name type="scientific">Lemna minor</name>
    <name type="common">Common duckweed</name>
    <dbReference type="NCBI Taxonomy" id="4472"/>
    <lineage>
        <taxon>Eukaryota</taxon>
        <taxon>Viridiplantae</taxon>
        <taxon>Streptophyta</taxon>
        <taxon>Embryophyta</taxon>
        <taxon>Tracheophyta</taxon>
        <taxon>Spermatophyta</taxon>
        <taxon>Magnoliopsida</taxon>
        <taxon>Liliopsida</taxon>
        <taxon>Araceae</taxon>
        <taxon>Lemnoideae</taxon>
        <taxon>Lemna</taxon>
    </lineage>
</organism>
<accession>A9L9A4</accession>
<comment type="function">
    <text evidence="1">RuBisCO catalyzes two reactions: the carboxylation of D-ribulose 1,5-bisphosphate, the primary event in carbon dioxide fixation, as well as the oxidative fragmentation of the pentose substrate in the photorespiration process. Both reactions occur simultaneously and in competition at the same active site.</text>
</comment>
<comment type="catalytic activity">
    <reaction evidence="1">
        <text>2 (2R)-3-phosphoglycerate + 2 H(+) = D-ribulose 1,5-bisphosphate + CO2 + H2O</text>
        <dbReference type="Rhea" id="RHEA:23124"/>
        <dbReference type="ChEBI" id="CHEBI:15377"/>
        <dbReference type="ChEBI" id="CHEBI:15378"/>
        <dbReference type="ChEBI" id="CHEBI:16526"/>
        <dbReference type="ChEBI" id="CHEBI:57870"/>
        <dbReference type="ChEBI" id="CHEBI:58272"/>
        <dbReference type="EC" id="4.1.1.39"/>
    </reaction>
</comment>
<comment type="catalytic activity">
    <reaction evidence="1">
        <text>D-ribulose 1,5-bisphosphate + O2 = 2-phosphoglycolate + (2R)-3-phosphoglycerate + 2 H(+)</text>
        <dbReference type="Rhea" id="RHEA:36631"/>
        <dbReference type="ChEBI" id="CHEBI:15378"/>
        <dbReference type="ChEBI" id="CHEBI:15379"/>
        <dbReference type="ChEBI" id="CHEBI:57870"/>
        <dbReference type="ChEBI" id="CHEBI:58033"/>
        <dbReference type="ChEBI" id="CHEBI:58272"/>
    </reaction>
</comment>
<comment type="cofactor">
    <cofactor evidence="1">
        <name>Mg(2+)</name>
        <dbReference type="ChEBI" id="CHEBI:18420"/>
    </cofactor>
    <text evidence="1">Binds 1 Mg(2+) ion per subunit.</text>
</comment>
<comment type="subunit">
    <text evidence="1">Heterohexadecamer of 8 large chains and 8 small chains; disulfide-linked. The disulfide link is formed within the large subunit homodimers.</text>
</comment>
<comment type="subcellular location">
    <subcellularLocation>
        <location>Plastid</location>
        <location>Chloroplast</location>
    </subcellularLocation>
</comment>
<comment type="PTM">
    <text evidence="1">The disulfide bond which can form in the large chain dimeric partners within the hexadecamer appears to be associated with oxidative stress and protein turnover.</text>
</comment>
<comment type="miscellaneous">
    <text evidence="1">The basic functional RuBisCO is composed of a large chain homodimer in a 'head-to-tail' conformation. In form I RuBisCO this homodimer is arranged in a barrel-like tetramer with the small subunits forming a tetrameric 'cap' on each end of the 'barrel'.</text>
</comment>
<comment type="similarity">
    <text evidence="1">Belongs to the RuBisCO large chain family. Type I subfamily.</text>
</comment>
<dbReference type="EC" id="4.1.1.39" evidence="1"/>
<dbReference type="EMBL" id="DQ400350">
    <property type="protein sequence ID" value="ABD48503.1"/>
    <property type="molecule type" value="Genomic_DNA"/>
</dbReference>
<dbReference type="RefSeq" id="YP_001595516.1">
    <property type="nucleotide sequence ID" value="NC_010109.1"/>
</dbReference>
<dbReference type="SMR" id="A9L9A4"/>
<dbReference type="GeneID" id="5787528"/>
<dbReference type="GO" id="GO:0009507">
    <property type="term" value="C:chloroplast"/>
    <property type="evidence" value="ECO:0007669"/>
    <property type="project" value="UniProtKB-SubCell"/>
</dbReference>
<dbReference type="GO" id="GO:0000287">
    <property type="term" value="F:magnesium ion binding"/>
    <property type="evidence" value="ECO:0007669"/>
    <property type="project" value="UniProtKB-UniRule"/>
</dbReference>
<dbReference type="GO" id="GO:0004497">
    <property type="term" value="F:monooxygenase activity"/>
    <property type="evidence" value="ECO:0007669"/>
    <property type="project" value="UniProtKB-KW"/>
</dbReference>
<dbReference type="GO" id="GO:0016984">
    <property type="term" value="F:ribulose-bisphosphate carboxylase activity"/>
    <property type="evidence" value="ECO:0007669"/>
    <property type="project" value="UniProtKB-UniRule"/>
</dbReference>
<dbReference type="GO" id="GO:0009853">
    <property type="term" value="P:photorespiration"/>
    <property type="evidence" value="ECO:0007669"/>
    <property type="project" value="UniProtKB-KW"/>
</dbReference>
<dbReference type="GO" id="GO:0019253">
    <property type="term" value="P:reductive pentose-phosphate cycle"/>
    <property type="evidence" value="ECO:0007669"/>
    <property type="project" value="UniProtKB-UniRule"/>
</dbReference>
<dbReference type="CDD" id="cd08212">
    <property type="entry name" value="RuBisCO_large_I"/>
    <property type="match status" value="1"/>
</dbReference>
<dbReference type="FunFam" id="3.20.20.110:FF:000001">
    <property type="entry name" value="Ribulose bisphosphate carboxylase large chain"/>
    <property type="match status" value="1"/>
</dbReference>
<dbReference type="FunFam" id="3.30.70.150:FF:000001">
    <property type="entry name" value="Ribulose bisphosphate carboxylase large chain"/>
    <property type="match status" value="1"/>
</dbReference>
<dbReference type="Gene3D" id="3.20.20.110">
    <property type="entry name" value="Ribulose bisphosphate carboxylase, large subunit, C-terminal domain"/>
    <property type="match status" value="1"/>
</dbReference>
<dbReference type="Gene3D" id="3.30.70.150">
    <property type="entry name" value="RuBisCO large subunit, N-terminal domain"/>
    <property type="match status" value="1"/>
</dbReference>
<dbReference type="HAMAP" id="MF_01338">
    <property type="entry name" value="RuBisCO_L_type1"/>
    <property type="match status" value="1"/>
</dbReference>
<dbReference type="InterPro" id="IPR033966">
    <property type="entry name" value="RuBisCO"/>
</dbReference>
<dbReference type="InterPro" id="IPR020878">
    <property type="entry name" value="RuBisCo_large_chain_AS"/>
</dbReference>
<dbReference type="InterPro" id="IPR000685">
    <property type="entry name" value="RuBisCO_lsu_C"/>
</dbReference>
<dbReference type="InterPro" id="IPR036376">
    <property type="entry name" value="RuBisCO_lsu_C_sf"/>
</dbReference>
<dbReference type="InterPro" id="IPR017443">
    <property type="entry name" value="RuBisCO_lsu_fd_N"/>
</dbReference>
<dbReference type="InterPro" id="IPR036422">
    <property type="entry name" value="RuBisCO_lsu_N_sf"/>
</dbReference>
<dbReference type="InterPro" id="IPR020888">
    <property type="entry name" value="RuBisCO_lsuI"/>
</dbReference>
<dbReference type="NCBIfam" id="NF003252">
    <property type="entry name" value="PRK04208.1"/>
    <property type="match status" value="1"/>
</dbReference>
<dbReference type="PANTHER" id="PTHR42704">
    <property type="entry name" value="RIBULOSE BISPHOSPHATE CARBOXYLASE"/>
    <property type="match status" value="1"/>
</dbReference>
<dbReference type="PANTHER" id="PTHR42704:SF15">
    <property type="entry name" value="RIBULOSE BISPHOSPHATE CARBOXYLASE LARGE CHAIN"/>
    <property type="match status" value="1"/>
</dbReference>
<dbReference type="Pfam" id="PF00016">
    <property type="entry name" value="RuBisCO_large"/>
    <property type="match status" value="1"/>
</dbReference>
<dbReference type="Pfam" id="PF02788">
    <property type="entry name" value="RuBisCO_large_N"/>
    <property type="match status" value="1"/>
</dbReference>
<dbReference type="SFLD" id="SFLDG01052">
    <property type="entry name" value="RuBisCO"/>
    <property type="match status" value="1"/>
</dbReference>
<dbReference type="SFLD" id="SFLDS00014">
    <property type="entry name" value="RuBisCO"/>
    <property type="match status" value="1"/>
</dbReference>
<dbReference type="SFLD" id="SFLDG00301">
    <property type="entry name" value="RuBisCO-like_proteins"/>
    <property type="match status" value="1"/>
</dbReference>
<dbReference type="SUPFAM" id="SSF51649">
    <property type="entry name" value="RuBisCo, C-terminal domain"/>
    <property type="match status" value="1"/>
</dbReference>
<dbReference type="SUPFAM" id="SSF54966">
    <property type="entry name" value="RuBisCO, large subunit, small (N-terminal) domain"/>
    <property type="match status" value="1"/>
</dbReference>
<dbReference type="PROSITE" id="PS00157">
    <property type="entry name" value="RUBISCO_LARGE"/>
    <property type="match status" value="1"/>
</dbReference>
<name>RBL_LEMMI</name>